<name>TI214_LIRTU</name>
<evidence type="ECO:0000250" key="1">
    <source>
        <dbReference type="UniProtKB" id="P56785"/>
    </source>
</evidence>
<evidence type="ECO:0000255" key="2"/>
<evidence type="ECO:0000256" key="3">
    <source>
        <dbReference type="SAM" id="MobiDB-lite"/>
    </source>
</evidence>
<evidence type="ECO:0000305" key="4"/>
<comment type="function">
    <text evidence="1">Involved in protein precursor import into chloroplasts. May be part of an intermediate translocation complex acting as a protein-conducting channel at the inner envelope.</text>
</comment>
<comment type="subunit">
    <text evidence="1">Part of the Tic complex.</text>
</comment>
<comment type="subcellular location">
    <subcellularLocation>
        <location evidence="1">Plastid</location>
        <location evidence="1">Chloroplast inner membrane</location>
        <topology evidence="2">Multi-pass membrane protein</topology>
    </subcellularLocation>
</comment>
<comment type="similarity">
    <text evidence="4">Belongs to the TIC214 family.</text>
</comment>
<protein>
    <recommendedName>
        <fullName evidence="1">Protein TIC 214</fullName>
    </recommendedName>
    <alternativeName>
        <fullName evidence="1">Translocon at the inner envelope membrane of chloroplasts 214</fullName>
        <shortName evidence="1">AtTIC214</shortName>
    </alternativeName>
</protein>
<accession>Q0G9G1</accession>
<geneLocation type="chloroplast"/>
<keyword id="KW-0150">Chloroplast</keyword>
<keyword id="KW-0472">Membrane</keyword>
<keyword id="KW-0934">Plastid</keyword>
<keyword id="KW-1001">Plastid inner membrane</keyword>
<keyword id="KW-0653">Protein transport</keyword>
<keyword id="KW-0812">Transmembrane</keyword>
<keyword id="KW-1133">Transmembrane helix</keyword>
<keyword id="KW-0813">Transport</keyword>
<dbReference type="EMBL" id="DQ899947">
    <property type="protein sequence ID" value="ABI32567.1"/>
    <property type="molecule type" value="Genomic_DNA"/>
</dbReference>
<dbReference type="RefSeq" id="YP_740260.1">
    <property type="nucleotide sequence ID" value="NC_008326.1"/>
</dbReference>
<dbReference type="GeneID" id="4266692"/>
<dbReference type="GO" id="GO:0009706">
    <property type="term" value="C:chloroplast inner membrane"/>
    <property type="evidence" value="ECO:0007669"/>
    <property type="project" value="UniProtKB-SubCell"/>
</dbReference>
<dbReference type="GO" id="GO:0015031">
    <property type="term" value="P:protein transport"/>
    <property type="evidence" value="ECO:0007669"/>
    <property type="project" value="UniProtKB-KW"/>
</dbReference>
<dbReference type="InterPro" id="IPR008896">
    <property type="entry name" value="TIC214"/>
</dbReference>
<dbReference type="PANTHER" id="PTHR33163:SF40">
    <property type="entry name" value="PROTEIN TIC 214"/>
    <property type="match status" value="1"/>
</dbReference>
<dbReference type="PANTHER" id="PTHR33163">
    <property type="entry name" value="PROTEIN TIC 214-RELATED"/>
    <property type="match status" value="1"/>
</dbReference>
<dbReference type="Pfam" id="PF05758">
    <property type="entry name" value="Ycf1"/>
    <property type="match status" value="2"/>
</dbReference>
<proteinExistence type="inferred from homology"/>
<reference key="1">
    <citation type="journal article" date="2006" name="BMC Evol. Biol.">
        <title>Complete plastid genome sequences of Drimys, Liriodendron, and Piper: implications for the phylogenetic relationships of magnoliids.</title>
        <authorList>
            <person name="Cai Z."/>
            <person name="Penaflor C."/>
            <person name="Kuehl J.V."/>
            <person name="Leebens-Mack J."/>
            <person name="Carlson J.E."/>
            <person name="dePamphilis C.W."/>
            <person name="Boore J.L."/>
            <person name="Jansen R.K."/>
        </authorList>
    </citation>
    <scope>NUCLEOTIDE SEQUENCE [LARGE SCALE GENOMIC DNA]</scope>
</reference>
<feature type="chain" id="PRO_0000262614" description="Protein TIC 214">
    <location>
        <begin position="1"/>
        <end position="1835"/>
    </location>
</feature>
<feature type="transmembrane region" description="Helical" evidence="2">
    <location>
        <begin position="25"/>
        <end position="45"/>
    </location>
</feature>
<feature type="transmembrane region" description="Helical" evidence="2">
    <location>
        <begin position="64"/>
        <end position="84"/>
    </location>
</feature>
<feature type="transmembrane region" description="Helical" evidence="2">
    <location>
        <begin position="87"/>
        <end position="107"/>
    </location>
</feature>
<feature type="transmembrane region" description="Helical" evidence="2">
    <location>
        <begin position="124"/>
        <end position="144"/>
    </location>
</feature>
<feature type="transmembrane region" description="Helical" evidence="2">
    <location>
        <begin position="172"/>
        <end position="192"/>
    </location>
</feature>
<feature type="transmembrane region" description="Helical" evidence="2">
    <location>
        <begin position="221"/>
        <end position="241"/>
    </location>
</feature>
<feature type="region of interest" description="Disordered" evidence="3">
    <location>
        <begin position="246"/>
        <end position="304"/>
    </location>
</feature>
<feature type="region of interest" description="Disordered" evidence="3">
    <location>
        <begin position="735"/>
        <end position="759"/>
    </location>
</feature>
<feature type="region of interest" description="Disordered" evidence="3">
    <location>
        <begin position="1535"/>
        <end position="1578"/>
    </location>
</feature>
<feature type="compositionally biased region" description="Basic and acidic residues" evidence="3">
    <location>
        <begin position="246"/>
        <end position="258"/>
    </location>
</feature>
<feature type="compositionally biased region" description="Acidic residues" evidence="3">
    <location>
        <begin position="259"/>
        <end position="268"/>
    </location>
</feature>
<feature type="compositionally biased region" description="Basic and acidic residues" evidence="3">
    <location>
        <begin position="1553"/>
        <end position="1569"/>
    </location>
</feature>
<organism>
    <name type="scientific">Liriodendron tulipifera</name>
    <name type="common">Tuliptree</name>
    <name type="synonym">Tulip poplar</name>
    <dbReference type="NCBI Taxonomy" id="3415"/>
    <lineage>
        <taxon>Eukaryota</taxon>
        <taxon>Viridiplantae</taxon>
        <taxon>Streptophyta</taxon>
        <taxon>Embryophyta</taxon>
        <taxon>Tracheophyta</taxon>
        <taxon>Spermatophyta</taxon>
        <taxon>Magnoliopsida</taxon>
        <taxon>Magnoliidae</taxon>
        <taxon>Magnoliales</taxon>
        <taxon>Magnoliaceae</taxon>
        <taxon>Liriodendron</taxon>
    </lineage>
</organism>
<sequence length="1835" mass="218305">MILKSFLLGNLLSLCMKIINSVVGVGLYYGFLTTFSIGPSYLFLLRARVMEEGTEKEVSATTGFITGQLMMFISIYYAPLHLALDRPHTITVLVLPYLLFHFFWNNHKHFFDYGSTTRNSMRNLSIQCVFLNNLIFQLFNHFILPSSTLARLVNIYMFRCNNKMLFVTSSFVGWLIGHIFFMKWVGLVLFWIRQNHSIRSNVLIRSNKYLVSELRNSMARIFSILLFITCVYYLGRIPSPIVTKKLKETSETEERGESAEETDVEIETTSETKGTKQEQEASTEEDPSLCSEEKEDPDKLDGNQGYQENWKLEILKDKDLFWFEKPLVTLLFDYKRWNRPLRYIKNDRFEKTVRNEMSQYFFHTCPSDGKKRISFTYPPSLSTFGEIIQRKMSLYTTDKLLSPEDPYNHWVYTNEQKRHNLSNEFINRIEALDRGTLTLDVLEKSTRLCNNENEQEFFPKIYDPFLNGPYRGTTKKVYSRSIMDDSITWTEDSIEMVWINKIHDIFPNDYREFEQKMDLFNGESLSTDIGHSLTSINKFAGESAPNLNLKGLALLAEQRRLDSENQTKCLKFLSDVVTTDPNDQTIQNKYIGIEEIGKKVPRWSYKLTDHLEEQEKENEEESTEDHGIRSRKAKRVVIYTDNDQNTNTYTSTSTNSDQAEELALIRYSQQSDFRRDLIKGSMRAQRRKTVTWEMFQANVHSPLFLDRIDKTFFFSFDISGMMNLIFRNWVGKGPEFKTSDSEEKEAKEKEKTKEEKKEENERIAIAETWDTIIFAQAIRGSMLVTQSILRKYIVLPSLIIAKNLGRMLLFQFPEWYEDWKEWNREMHVKCTYNGVQLSETEFPKDWLTDGIQIKILFPFCLKPWHRSKLRSHHRDRMKKKGKKENFCFLTVWGMETELPFGSSRKRPSFFEPICKELEKKIRKVKKKCFLVLRALGERTKWFLRVLKEKTRWILKTVLFIKRIIKEFAKVNPILLFGLRKVYEPNENRKDSITNNKINHESIIRIRSVDWTNYSLTEKKMKDLADRTTTIRNKIERITKDKRKIFLTPDIKISPNETGCDDKRSESQKHIWQISKRRSARLIRKWHYFMKSFIERIYMDIFLCTINIPRRNAHLFLESTKKIIDKDIYNDERNKEGIDETNQNAIHFISTIKKSLSNISNNKSQIYCDLSSLSQAYVFYNLLQIQVINKYYLRFVLQYRGAYLFLKDRIKDHFGTRGILDAKSRPKKPPNSGMNEWKNWLRGHYQYNLSQTRWSRLVPQKWRNRVNQRRTIQNKDSKKDSYEKDQFIHYEKQNNYVVNSLPNKKEKFKKHYRYDLLSHKYIHYEDRKDSYIYGSPLQVNVNGDREIPYNYNTPKPESFYVPRGIAISDYLGEESIIDTGKNPDRKYLEWRILNFFLRKNIDIETWIDIDTGTNINKNAKTGTNDYQIIDKKDLFYLPIHQEINPSNQKQGFFFDWMGMNEEMLYRPISNLEPWFFSEFVLLYDAYKIKPWIIPIKLLIFNLNGNENISENKNINRNQKKDLRLSSNQKEYLELENRNQEEKEQLGQGNLGSDPRNRQKDLEKDYAESDIKKRRKKRQSKSNKEAELNFFLKRYLLFQLRWDDPLNQRMINNIKVYCLLLRLINPKEIAISSIQRGEMRLDVMLIQKDLTLTELIKRGILIIEPVRLSIKWDGQWIMYQTIGISLVHKNKYQTNRICREKKYVDENSFDRSIAQHGKVLVNGDENNYALLVPENIPSPRRRRELRILICLNSENGNVVDRNSVFFNGNNVRNCVQFLDEDKHFDTDINKFIQFKLFLCPNYRLEDLACMNRYWFDTNNGSRFSMSRIHMYPRFRIS</sequence>
<gene>
    <name evidence="1" type="primary">TIC214</name>
    <name type="synonym">ycf1</name>
</gene>